<dbReference type="EMBL" id="AK301083">
    <property type="protein sequence ID" value="BAG62687.1"/>
    <property type="molecule type" value="mRNA"/>
</dbReference>
<dbReference type="EMBL" id="AK074959">
    <property type="protein sequence ID" value="BAC11316.1"/>
    <property type="molecule type" value="mRNA"/>
</dbReference>
<dbReference type="EMBL" id="AL158049">
    <property type="status" value="NOT_ANNOTATED_CDS"/>
    <property type="molecule type" value="Genomic_DNA"/>
</dbReference>
<dbReference type="EMBL" id="BC051803">
    <property type="protein sequence ID" value="AAH51803.1"/>
    <property type="molecule type" value="mRNA"/>
</dbReference>
<dbReference type="CCDS" id="CCDS47411.1">
    <molecule id="Q8NC56-2"/>
</dbReference>
<dbReference type="CCDS" id="CCDS4785.1">
    <molecule id="Q8NC56-1"/>
</dbReference>
<dbReference type="RefSeq" id="NP_001137416.1">
    <molecule id="Q8NC56-2"/>
    <property type="nucleotide sequence ID" value="NM_001143944.1"/>
</dbReference>
<dbReference type="RefSeq" id="NP_001335638.1">
    <molecule id="Q8NC56-2"/>
    <property type="nucleotide sequence ID" value="NM_001348709.2"/>
</dbReference>
<dbReference type="RefSeq" id="NP_851853.1">
    <molecule id="Q8NC56-1"/>
    <property type="nucleotide sequence ID" value="NM_181336.4"/>
</dbReference>
<dbReference type="SMR" id="Q8NC56"/>
<dbReference type="BioGRID" id="128735">
    <property type="interactions" value="115"/>
</dbReference>
<dbReference type="FunCoup" id="Q8NC56">
    <property type="interactions" value="1879"/>
</dbReference>
<dbReference type="IntAct" id="Q8NC56">
    <property type="interactions" value="68"/>
</dbReference>
<dbReference type="MINT" id="Q8NC56"/>
<dbReference type="STRING" id="9606.ENSP00000293760"/>
<dbReference type="GlyGen" id="Q8NC56">
    <property type="glycosylation" value="4 sites, 9 N-linked glycans (2 sites), 1 O-linked glycan (1 site)"/>
</dbReference>
<dbReference type="iPTMnet" id="Q8NC56"/>
<dbReference type="PhosphoSitePlus" id="Q8NC56"/>
<dbReference type="SwissPalm" id="Q8NC56"/>
<dbReference type="BioMuta" id="LEMD2"/>
<dbReference type="DMDM" id="74751184"/>
<dbReference type="jPOST" id="Q8NC56"/>
<dbReference type="MassIVE" id="Q8NC56"/>
<dbReference type="PaxDb" id="9606-ENSP00000293760"/>
<dbReference type="PeptideAtlas" id="Q8NC56"/>
<dbReference type="ProteomicsDB" id="18702"/>
<dbReference type="ProteomicsDB" id="72855">
    <molecule id="Q8NC56-1"/>
</dbReference>
<dbReference type="Pumba" id="Q8NC56"/>
<dbReference type="Antibodypedia" id="1891">
    <property type="antibodies" value="138 antibodies from 25 providers"/>
</dbReference>
<dbReference type="DNASU" id="221496"/>
<dbReference type="Ensembl" id="ENST00000293760.10">
    <molecule id="Q8NC56-1"/>
    <property type="protein sequence ID" value="ENSP00000293760.5"/>
    <property type="gene ID" value="ENSG00000161904.13"/>
</dbReference>
<dbReference type="Ensembl" id="ENST00000508327.5">
    <molecule id="Q8NC56-2"/>
    <property type="protein sequence ID" value="ENSP00000421704.1"/>
    <property type="gene ID" value="ENSG00000161904.13"/>
</dbReference>
<dbReference type="GeneID" id="221496"/>
<dbReference type="KEGG" id="hsa:221496"/>
<dbReference type="MANE-Select" id="ENST00000293760.10">
    <property type="protein sequence ID" value="ENSP00000293760.5"/>
    <property type="RefSeq nucleotide sequence ID" value="NM_181336.4"/>
    <property type="RefSeq protein sequence ID" value="NP_851853.1"/>
</dbReference>
<dbReference type="UCSC" id="uc011drl.3">
    <molecule id="Q8NC56-1"/>
    <property type="organism name" value="human"/>
</dbReference>
<dbReference type="AGR" id="HGNC:21244"/>
<dbReference type="CTD" id="221496"/>
<dbReference type="DisGeNET" id="221496"/>
<dbReference type="GeneCards" id="LEMD2"/>
<dbReference type="HGNC" id="HGNC:21244">
    <property type="gene designation" value="LEMD2"/>
</dbReference>
<dbReference type="HPA" id="ENSG00000161904">
    <property type="expression patterns" value="Low tissue specificity"/>
</dbReference>
<dbReference type="MalaCards" id="LEMD2"/>
<dbReference type="MIM" id="212500">
    <property type="type" value="phenotype"/>
</dbReference>
<dbReference type="MIM" id="616312">
    <property type="type" value="gene"/>
</dbReference>
<dbReference type="MIM" id="619322">
    <property type="type" value="phenotype"/>
</dbReference>
<dbReference type="neXtProt" id="NX_Q8NC56"/>
<dbReference type="OpenTargets" id="ENSG00000161904"/>
<dbReference type="Orphanet" id="441447">
    <property type="disease" value="Early-onset posterior subcapsular cataract"/>
</dbReference>
<dbReference type="Orphanet" id="98994">
    <property type="disease" value="Total early-onset cataract"/>
</dbReference>
<dbReference type="Orphanet" id="659873">
    <property type="disease" value="Wormian bones-micrognathia-abnormal dentition-progeroid syndrome"/>
</dbReference>
<dbReference type="PharmGKB" id="PA134952135"/>
<dbReference type="VEuPathDB" id="HostDB:ENSG00000161904"/>
<dbReference type="eggNOG" id="ENOG502QRKK">
    <property type="taxonomic scope" value="Eukaryota"/>
</dbReference>
<dbReference type="GeneTree" id="ENSGT00940000160955"/>
<dbReference type="HOGENOM" id="CLU_045257_0_0_1"/>
<dbReference type="InParanoid" id="Q8NC56"/>
<dbReference type="OMA" id="STSWFCQ"/>
<dbReference type="OrthoDB" id="118234at2759"/>
<dbReference type="PAN-GO" id="Q8NC56">
    <property type="GO annotations" value="4 GO annotations based on evolutionary models"/>
</dbReference>
<dbReference type="PhylomeDB" id="Q8NC56"/>
<dbReference type="TreeFam" id="TF315385"/>
<dbReference type="PathwayCommons" id="Q8NC56"/>
<dbReference type="Reactome" id="R-HSA-2980766">
    <property type="pathway name" value="Nuclear Envelope Breakdown"/>
</dbReference>
<dbReference type="Reactome" id="R-HSA-2995383">
    <property type="pathway name" value="Initiation of Nuclear Envelope (NE) Reformation"/>
</dbReference>
<dbReference type="Reactome" id="R-HSA-4419969">
    <property type="pathway name" value="Depolymerization of the Nuclear Lamina"/>
</dbReference>
<dbReference type="Reactome" id="R-HSA-9668328">
    <property type="pathway name" value="Sealing of the nuclear envelope (NE) by ESCRT-III"/>
</dbReference>
<dbReference type="SignaLink" id="Q8NC56"/>
<dbReference type="BioGRID-ORCS" id="221496">
    <property type="hits" value="162 hits in 1162 CRISPR screens"/>
</dbReference>
<dbReference type="CD-CODE" id="38BEFE36">
    <property type="entry name" value="Synthetic Condensate 000277"/>
</dbReference>
<dbReference type="ChiTaRS" id="LEMD2">
    <property type="organism name" value="human"/>
</dbReference>
<dbReference type="GenomeRNAi" id="221496"/>
<dbReference type="Pharos" id="Q8NC56">
    <property type="development level" value="Tbio"/>
</dbReference>
<dbReference type="PRO" id="PR:Q8NC56"/>
<dbReference type="Proteomes" id="UP000005640">
    <property type="component" value="Chromosome 6"/>
</dbReference>
<dbReference type="RNAct" id="Q8NC56">
    <property type="molecule type" value="protein"/>
</dbReference>
<dbReference type="Bgee" id="ENSG00000161904">
    <property type="expression patterns" value="Expressed in right hemisphere of cerebellum and 114 other cell types or tissues"/>
</dbReference>
<dbReference type="ExpressionAtlas" id="Q8NC56">
    <property type="expression patterns" value="baseline and differential"/>
</dbReference>
<dbReference type="GO" id="GO:0000785">
    <property type="term" value="C:chromatin"/>
    <property type="evidence" value="ECO:0000314"/>
    <property type="project" value="ARUK-UCL"/>
</dbReference>
<dbReference type="GO" id="GO:0005737">
    <property type="term" value="C:cytoplasm"/>
    <property type="evidence" value="ECO:0007669"/>
    <property type="project" value="UniProtKB-KW"/>
</dbReference>
<dbReference type="GO" id="GO:0016020">
    <property type="term" value="C:membrane"/>
    <property type="evidence" value="ECO:0007005"/>
    <property type="project" value="UniProtKB"/>
</dbReference>
<dbReference type="GO" id="GO:0005635">
    <property type="term" value="C:nuclear envelope"/>
    <property type="evidence" value="ECO:0000304"/>
    <property type="project" value="Reactome"/>
</dbReference>
<dbReference type="GO" id="GO:0005637">
    <property type="term" value="C:nuclear inner membrane"/>
    <property type="evidence" value="ECO:0000314"/>
    <property type="project" value="MGI"/>
</dbReference>
<dbReference type="GO" id="GO:0031965">
    <property type="term" value="C:nuclear membrane"/>
    <property type="evidence" value="ECO:0000314"/>
    <property type="project" value="HPA"/>
</dbReference>
<dbReference type="GO" id="GO:0034399">
    <property type="term" value="C:nuclear periphery"/>
    <property type="evidence" value="ECO:0000318"/>
    <property type="project" value="GO_Central"/>
</dbReference>
<dbReference type="GO" id="GO:0005819">
    <property type="term" value="C:spindle"/>
    <property type="evidence" value="ECO:0007669"/>
    <property type="project" value="UniProtKB-SubCell"/>
</dbReference>
<dbReference type="GO" id="GO:0060914">
    <property type="term" value="P:heart formation"/>
    <property type="evidence" value="ECO:0007669"/>
    <property type="project" value="Ensembl"/>
</dbReference>
<dbReference type="GO" id="GO:0043409">
    <property type="term" value="P:negative regulation of MAPK cascade"/>
    <property type="evidence" value="ECO:0007669"/>
    <property type="project" value="Ensembl"/>
</dbReference>
<dbReference type="GO" id="GO:0051898">
    <property type="term" value="P:negative regulation of phosphatidylinositol 3-kinase/protein kinase B signal transduction"/>
    <property type="evidence" value="ECO:0007669"/>
    <property type="project" value="Ensembl"/>
</dbReference>
<dbReference type="GO" id="GO:0022008">
    <property type="term" value="P:neurogenesis"/>
    <property type="evidence" value="ECO:0007669"/>
    <property type="project" value="Ensembl"/>
</dbReference>
<dbReference type="GO" id="GO:0006998">
    <property type="term" value="P:nuclear envelope organization"/>
    <property type="evidence" value="ECO:0000315"/>
    <property type="project" value="UniProtKB"/>
</dbReference>
<dbReference type="GO" id="GO:0071763">
    <property type="term" value="P:nuclear membrane organization"/>
    <property type="evidence" value="ECO:0000318"/>
    <property type="project" value="GO_Central"/>
</dbReference>
<dbReference type="GO" id="GO:0071168">
    <property type="term" value="P:protein localization to chromatin"/>
    <property type="evidence" value="ECO:0000315"/>
    <property type="project" value="ARUK-UCL"/>
</dbReference>
<dbReference type="GO" id="GO:0035914">
    <property type="term" value="P:skeletal muscle cell differentiation"/>
    <property type="evidence" value="ECO:0000316"/>
    <property type="project" value="MGI"/>
</dbReference>
<dbReference type="FunFam" id="1.10.720.40:FF:000001">
    <property type="entry name" value="LEM domain containing 2, isoform CRA_a"/>
    <property type="match status" value="1"/>
</dbReference>
<dbReference type="FunFam" id="1.10.10.1180:FF:000002">
    <property type="entry name" value="LEM domain-containing protein 2"/>
    <property type="match status" value="1"/>
</dbReference>
<dbReference type="Gene3D" id="1.10.720.40">
    <property type="match status" value="1"/>
</dbReference>
<dbReference type="Gene3D" id="1.10.10.1180">
    <property type="entry name" value="MAN1, winged-helix domain"/>
    <property type="match status" value="1"/>
</dbReference>
<dbReference type="InterPro" id="IPR052277">
    <property type="entry name" value="INM_ESCRT-Associated"/>
</dbReference>
<dbReference type="InterPro" id="IPR011015">
    <property type="entry name" value="LEM/LEM-like_dom_sf"/>
</dbReference>
<dbReference type="InterPro" id="IPR003887">
    <property type="entry name" value="LEM_dom"/>
</dbReference>
<dbReference type="InterPro" id="IPR018996">
    <property type="entry name" value="Man1/Src1-like_C"/>
</dbReference>
<dbReference type="InterPro" id="IPR041885">
    <property type="entry name" value="MAN1_winged_helix_dom"/>
</dbReference>
<dbReference type="PANTHER" id="PTHR13428">
    <property type="entry name" value="INNER NUCLEAR MEMBRANE PROTEIN MAN1 LEM DOMAIN CONTAINING PROTEIN"/>
    <property type="match status" value="1"/>
</dbReference>
<dbReference type="PANTHER" id="PTHR13428:SF8">
    <property type="entry name" value="LEM DOMAIN-CONTAINING PROTEIN 2"/>
    <property type="match status" value="1"/>
</dbReference>
<dbReference type="Pfam" id="PF03020">
    <property type="entry name" value="LEM"/>
    <property type="match status" value="1"/>
</dbReference>
<dbReference type="Pfam" id="PF09402">
    <property type="entry name" value="MSC"/>
    <property type="match status" value="1"/>
</dbReference>
<dbReference type="SMART" id="SM00540">
    <property type="entry name" value="LEM"/>
    <property type="match status" value="1"/>
</dbReference>
<dbReference type="SUPFAM" id="SSF63451">
    <property type="entry name" value="LEM domain"/>
    <property type="match status" value="1"/>
</dbReference>
<dbReference type="PROSITE" id="PS50954">
    <property type="entry name" value="LEM"/>
    <property type="match status" value="1"/>
</dbReference>
<organism>
    <name type="scientific">Homo sapiens</name>
    <name type="common">Human</name>
    <dbReference type="NCBI Taxonomy" id="9606"/>
    <lineage>
        <taxon>Eukaryota</taxon>
        <taxon>Metazoa</taxon>
        <taxon>Chordata</taxon>
        <taxon>Craniata</taxon>
        <taxon>Vertebrata</taxon>
        <taxon>Euteleostomi</taxon>
        <taxon>Mammalia</taxon>
        <taxon>Eutheria</taxon>
        <taxon>Euarchontoglires</taxon>
        <taxon>Primates</taxon>
        <taxon>Haplorrhini</taxon>
        <taxon>Catarrhini</taxon>
        <taxon>Hominidae</taxon>
        <taxon>Homo</taxon>
    </lineage>
</organism>
<evidence type="ECO:0000250" key="1">
    <source>
        <dbReference type="UniProtKB" id="Q6DVA0"/>
    </source>
</evidence>
<evidence type="ECO:0000255" key="2"/>
<evidence type="ECO:0000255" key="3">
    <source>
        <dbReference type="PROSITE-ProRule" id="PRU00313"/>
    </source>
</evidence>
<evidence type="ECO:0000256" key="4">
    <source>
        <dbReference type="SAM" id="MobiDB-lite"/>
    </source>
</evidence>
<evidence type="ECO:0000269" key="5">
    <source>
    </source>
</evidence>
<evidence type="ECO:0000269" key="6">
    <source>
    </source>
</evidence>
<evidence type="ECO:0000269" key="7">
    <source>
    </source>
</evidence>
<evidence type="ECO:0000269" key="8">
    <source>
    </source>
</evidence>
<evidence type="ECO:0000269" key="9">
    <source>
    </source>
</evidence>
<evidence type="ECO:0000269" key="10">
    <source>
    </source>
</evidence>
<evidence type="ECO:0000303" key="11">
    <source>
    </source>
</evidence>
<evidence type="ECO:0000303" key="12">
    <source>
    </source>
</evidence>
<evidence type="ECO:0000305" key="13"/>
<evidence type="ECO:0007744" key="14">
    <source>
    </source>
</evidence>
<evidence type="ECO:0007744" key="15">
    <source>
    </source>
</evidence>
<evidence type="ECO:0007744" key="16">
    <source>
    </source>
</evidence>
<evidence type="ECO:0007744" key="17">
    <source>
    </source>
</evidence>
<evidence type="ECO:0007744" key="18">
    <source>
    </source>
</evidence>
<accession>Q8NC56</accession>
<accession>B4DVH5</accession>
<accession>E7EVT2</accession>
<accession>Q5T972</accession>
<accession>Q5T974</accession>
<protein>
    <recommendedName>
        <fullName>LEM domain-containing protein 2</fullName>
        <shortName>hLEM2</shortName>
    </recommendedName>
</protein>
<name>LEMD2_HUMAN</name>
<gene>
    <name type="primary">LEMD2</name>
</gene>
<comment type="function">
    <text evidence="1 5 6 8 10">Nuclear lamina-associated inner nuclear membrane protein that is involved in nuclear structure organization, maintenance of nuclear envelope (NE) integrity and NE reformation after mitosis (PubMed:16339967, PubMed:17097643, PubMed:28242692, PubMed:32494070). Plays a role as transmembrane adapter for the endosomal sorting complexes required for transport (ESCRT), and is thereby involved in ESCRT-mediated NE reformation (PubMed:28242692, PubMed:32494070). Promotes ESCRT-mediated NE closure by recruiting CHMP7 and downstream ESCRT-III proteins IST1/CHMP8 and CHMP2A to the reforming NE during anaphase (PubMed:28242692). During nuclear reassembly, condenses into a liquid-like coating around microtubule spindles and coassembles with CHMP7 to form a macromolecular O-ring seal at the confluence between membranes, chromatin, and the spindle to facilitate early nuclear sealing (PubMed:32494070). Plays a role in the organization of heterochromatin associated with the NE and in the maintenance of NE organization under mechanical stress (By similarity). Required for embryonic development and involved in regulation of several signaling pathways such as MAPK and AKT (By similarity). Required for myoblast differentiation involving regulation of ERK signaling (By similarity). Essential for cardiac homeostasis and proper heart function (By similarity).</text>
</comment>
<comment type="subunit">
    <text evidence="5 8 10">Interacts (via N-terminus) with LMNA isoform C (via C-terminus) (in vitro) (PubMed:16339967). Interacts (via LEM domain) with BANF1 (PubMed:32494070). Interacts (via C-terminus) with CHMP7 (PubMed:28242692). Interacts (via N-terminus) with tubulin; the interaction causes microtubule bundling and stabilization (in vitro) (PubMed:32494070).</text>
</comment>
<comment type="interaction">
    <interactant intactId="EBI-6149955">
        <id>Q8NC56</id>
    </interactant>
    <interactant intactId="EBI-7362971">
        <id>Q96HU1</id>
        <label>SGSM3</label>
    </interactant>
    <organismsDiffer>false</organismsDiffer>
    <experiments>2</experiments>
</comment>
<comment type="subcellular location">
    <subcellularLocation>
        <location evidence="5 6 8 9 10">Nucleus inner membrane</location>
        <topology evidence="5">Multi-pass membrane protein</topology>
    </subcellularLocation>
    <subcellularLocation>
        <location evidence="8">Nucleus envelope</location>
    </subcellularLocation>
    <subcellularLocation>
        <location evidence="10">Cytoplasm</location>
        <location evidence="10">Cytoskeleton</location>
        <location evidence="10">Spindle</location>
    </subcellularLocation>
    <text evidence="5 8 10">Lamina-associated protein residing in the inner nuclear membrane (INM) of the nuclear envelope (NE) (PubMed:16339967). The localization to the INM is dependent on LMNA (PubMed:16339967). Evenly distributed around the NE during interphase (PubMed:16339967). During metaphase, found in a reticular network (PubMed:28242692). Recruited to the reforming NE on chromatin disks in early anaphase (PubMed:28242692). In late anaphase, concentrates at the NE core proximal to spindle microtubules, and then broadening to a distributed nuclear rim pattern (PubMed:28242692, PubMed:32494070).</text>
</comment>
<comment type="alternative products">
    <event type="alternative splicing"/>
    <isoform>
        <id>Q8NC56-1</id>
        <name>1</name>
        <sequence type="displayed"/>
    </isoform>
    <isoform>
        <id>Q8NC56-2</id>
        <name>2</name>
        <sequence type="described" ref="VSP_044847"/>
    </isoform>
</comment>
<comment type="tissue specificity">
    <text evidence="5">Ubiquitously expressed, including bone marrow, brain, kidney, colon, skeletal muscle, thymus, testis and uterus.</text>
</comment>
<comment type="domain">
    <text evidence="5 10">The LEM domain is required for inner nuclear membrane (INM) localization and contains a BANF1 conserved binding motif which allows localization to chromatin (PubMed:16339967, PubMed:32494070). In late anaphase, as the reforming nuclear envelope (NE) surrounds the chromatin disk, both the LEM domain and the disordered regions are necessary for localization to the NE core (PubMed:32494070).</text>
</comment>
<comment type="domain">
    <text evidence="10">The disordered regions, also named low complexity domain, confer the ability to phase separate (PubMed:32494070). In late anaphase, as the reforming nuclear envelope (NE) surrounds the chromatin disk, both the LEM domain and the disordered regions are necessary for localization to the NE core (PubMed:32494070). During NE reformation, the proline-arginine-rich sequence within the disordered region binds microtubules, targeting LEM2 condensation to spindle microtubules traversing the nascent NE (PubMed:32494070).</text>
</comment>
<comment type="domain">
    <text evidence="10">The winged-helix (WH) region (residues 395-503) activates the ESCRT-II/ESCRT-III hybrid protein CHMP7 to form co-oligomeric rings around spindle microtubules to facilitate early nuclear sealing.</text>
</comment>
<comment type="PTM">
    <text evidence="10">Phosphorylated; strongly phosphorylated in mitosis compared to G1/S.</text>
</comment>
<comment type="disease" evidence="7">
    <disease id="DI-04739">
        <name>Cataract 46, juvenile-onset, with or without arrhythmic cardiomyopathy</name>
        <acronym>CTRCT46</acronym>
        <description>A form of cataract, an opacification of the crystalline lens of the eye that frequently results in visual impairment or blindness. Opacities vary in morphology, are often confined to a portion of the lens, and may be static or progressive. In general, the more posteriorly located and dense an opacity, the greater the impact on visual function. CTRCT46 can be associated with variable onset of a severe form of arrhythmic cardiomyopathy resulting in sudden cardiac death.</description>
        <dbReference type="MIM" id="212500"/>
    </disease>
    <text>The disease is caused by variants affecting the gene represented in this entry.</text>
</comment>
<comment type="disease" evidence="9">
    <disease id="DI-06107">
        <name>Marbach-Rustad progeroid syndrome</name>
        <acronym>MARUPS</acronym>
        <description>An autosomal dominant syndrome characterized by progeria-like appearance with little subcutaneous fat and triangular facies, growth retardation, short stature, hypoplastic mandible crowded with unerupted supernumerary teeth, and cerebellar intention tremor.</description>
        <dbReference type="MIM" id="619322"/>
    </disease>
    <text>The disease is caused by variants affecting the gene represented in this entry.</text>
</comment>
<sequence>MAGLSDLELRRELQALGFQPGPITDTTRDVYRNKLRRLRGEARLRDEERLREEARPRGEERLREEARLREDAPLRARPAAASPRAEPWLSQPASGSAYATPGAYGDIRPSAASWVGSRGLAYPARPAQLRRRASVRGSSEEDEDARTPDRATQGPGLAARRWWAASPAPARLPSSLLGPDPRPGLRATRAGPAGAARARPEVGRRLERWLSRLLLWASLGLLLVFLGILWVKMGKPSAPQEAEDNMKLLPVDCERKTDEFCQAKQKAALLELLHELYNFLAIQAGNFECGNPENLKSKCIPVMEAQEYIANVTSSSSAKFEAALTWILSSNKDVGIWLKGEDQSELVTTVDKVVCLESAHPRMGVGCRLSRALLTAVTNVLIFFWCLAFLWGLLILLKYRWRKLEEEEQAMYEMVKKIIDVVQDHYVDWEQDMERYPYVGILHVRDSLIPPQSRRRMKRVWDRAVEFLASNESRIQTESHRVAGEDMLVWRWTKPSSFSDSER</sequence>
<keyword id="KW-0007">Acetylation</keyword>
<keyword id="KW-0025">Alternative splicing</keyword>
<keyword id="KW-0898">Cataract</keyword>
<keyword id="KW-0963">Cytoplasm</keyword>
<keyword id="KW-0206">Cytoskeleton</keyword>
<keyword id="KW-0225">Disease variant</keyword>
<keyword id="KW-0472">Membrane</keyword>
<keyword id="KW-0539">Nucleus</keyword>
<keyword id="KW-0597">Phosphoprotein</keyword>
<keyword id="KW-1267">Proteomics identification</keyword>
<keyword id="KW-1185">Reference proteome</keyword>
<keyword id="KW-0812">Transmembrane</keyword>
<keyword id="KW-1133">Transmembrane helix</keyword>
<proteinExistence type="evidence at protein level"/>
<feature type="initiator methionine" description="Removed" evidence="17">
    <location>
        <position position="1"/>
    </location>
</feature>
<feature type="chain" id="PRO_0000285249" description="LEM domain-containing protein 2">
    <location>
        <begin position="2"/>
        <end position="503"/>
    </location>
</feature>
<feature type="transmembrane region" description="Helical" evidence="2">
    <location>
        <begin position="213"/>
        <end position="233"/>
    </location>
</feature>
<feature type="transmembrane region" description="Helical" evidence="2">
    <location>
        <begin position="377"/>
        <end position="397"/>
    </location>
</feature>
<feature type="domain" description="LEM" evidence="3">
    <location>
        <begin position="2"/>
        <end position="42"/>
    </location>
</feature>
<feature type="region of interest" description="Disordered" evidence="4">
    <location>
        <begin position="42"/>
        <end position="97"/>
    </location>
</feature>
<feature type="region of interest" description="Required for nuclear retention and interaction with LMNA isoform C" evidence="5">
    <location>
        <begin position="74"/>
        <end position="130"/>
    </location>
</feature>
<feature type="region of interest" description="Disordered" evidence="4">
    <location>
        <begin position="127"/>
        <end position="157"/>
    </location>
</feature>
<feature type="region of interest" description="Disordered" evidence="4">
    <location>
        <begin position="172"/>
        <end position="198"/>
    </location>
</feature>
<feature type="region of interest" description="Winged-Helix (WH)" evidence="12">
    <location>
        <begin position="395"/>
        <end position="503"/>
    </location>
</feature>
<feature type="compositionally biased region" description="Basic and acidic residues" evidence="4">
    <location>
        <begin position="42"/>
        <end position="74"/>
    </location>
</feature>
<feature type="compositionally biased region" description="Low complexity" evidence="4">
    <location>
        <begin position="75"/>
        <end position="87"/>
    </location>
</feature>
<feature type="compositionally biased region" description="Low complexity" evidence="4">
    <location>
        <begin position="184"/>
        <end position="197"/>
    </location>
</feature>
<feature type="modified residue" description="N-acetylalanine" evidence="17">
    <location>
        <position position="2"/>
    </location>
</feature>
<feature type="modified residue" description="Phosphoserine" evidence="18">
    <location>
        <position position="166"/>
    </location>
</feature>
<feature type="modified residue" description="Phosphoserine" evidence="18">
    <location>
        <position position="175"/>
    </location>
</feature>
<feature type="modified residue" description="Phosphoserine" evidence="16">
    <location>
        <position position="497"/>
    </location>
</feature>
<feature type="modified residue" description="Phosphoserine" evidence="14 15 16 18">
    <location>
        <position position="499"/>
    </location>
</feature>
<feature type="modified residue" description="Phosphoserine" evidence="18">
    <location>
        <position position="501"/>
    </location>
</feature>
<feature type="splice variant" id="VSP_044847" description="In isoform 2." evidence="11">
    <location>
        <begin position="1"/>
        <end position="302"/>
    </location>
</feature>
<feature type="sequence variant" id="VAR_076992" description="In CTRCT46; dbSNP:rs878852983." evidence="7">
    <original>L</original>
    <variation>R</variation>
    <location>
        <position position="13"/>
    </location>
</feature>
<feature type="sequence variant" id="VAR_085694" description="In MARUPS; dbSNP:rs1767330976." evidence="9">
    <original>S</original>
    <variation>F</variation>
    <location>
        <position position="479"/>
    </location>
</feature>
<feature type="mutagenesis site" description="Disrupts LEMD2 accumulation within the nuclear envelope (NE) and subsequent NE core enrichment in anaphase cells." evidence="10">
    <original>GPIT</original>
    <variation>AAAA</variation>
    <location>
        <begin position="21"/>
        <end position="24"/>
    </location>
</feature>
<feature type="mutagenesis site" description="Compromises nuclear envelope enrichment." evidence="10">
    <location>
        <begin position="43"/>
        <end position="202"/>
    </location>
</feature>
<feature type="mutagenesis site" description="Failure to enrich at microtubule-containing nuclear envelope core during anaphase." evidence="10">
    <location>
        <begin position="145"/>
        <end position="213"/>
    </location>
</feature>
<feature type="mutagenesis site" description="Does not affect nuclear envelope enrichment." evidence="10">
    <location>
        <begin position="415"/>
        <end position="485"/>
    </location>
</feature>
<feature type="sequence conflict" description="In Ref. 1; BAG62687." evidence="13" ref="1">
    <original>S</original>
    <variation>F</variation>
    <location>
        <position position="316"/>
    </location>
</feature>
<reference key="1">
    <citation type="journal article" date="2004" name="Nat. Genet.">
        <title>Complete sequencing and characterization of 21,243 full-length human cDNAs.</title>
        <authorList>
            <person name="Ota T."/>
            <person name="Suzuki Y."/>
            <person name="Nishikawa T."/>
            <person name="Otsuki T."/>
            <person name="Sugiyama T."/>
            <person name="Irie R."/>
            <person name="Wakamatsu A."/>
            <person name="Hayashi K."/>
            <person name="Sato H."/>
            <person name="Nagai K."/>
            <person name="Kimura K."/>
            <person name="Makita H."/>
            <person name="Sekine M."/>
            <person name="Obayashi M."/>
            <person name="Nishi T."/>
            <person name="Shibahara T."/>
            <person name="Tanaka T."/>
            <person name="Ishii S."/>
            <person name="Yamamoto J."/>
            <person name="Saito K."/>
            <person name="Kawai Y."/>
            <person name="Isono Y."/>
            <person name="Nakamura Y."/>
            <person name="Nagahari K."/>
            <person name="Murakami K."/>
            <person name="Yasuda T."/>
            <person name="Iwayanagi T."/>
            <person name="Wagatsuma M."/>
            <person name="Shiratori A."/>
            <person name="Sudo H."/>
            <person name="Hosoiri T."/>
            <person name="Kaku Y."/>
            <person name="Kodaira H."/>
            <person name="Kondo H."/>
            <person name="Sugawara M."/>
            <person name="Takahashi M."/>
            <person name="Kanda K."/>
            <person name="Yokoi T."/>
            <person name="Furuya T."/>
            <person name="Kikkawa E."/>
            <person name="Omura Y."/>
            <person name="Abe K."/>
            <person name="Kamihara K."/>
            <person name="Katsuta N."/>
            <person name="Sato K."/>
            <person name="Tanikawa M."/>
            <person name="Yamazaki M."/>
            <person name="Ninomiya K."/>
            <person name="Ishibashi T."/>
            <person name="Yamashita H."/>
            <person name="Murakawa K."/>
            <person name="Fujimori K."/>
            <person name="Tanai H."/>
            <person name="Kimata M."/>
            <person name="Watanabe M."/>
            <person name="Hiraoka S."/>
            <person name="Chiba Y."/>
            <person name="Ishida S."/>
            <person name="Ono Y."/>
            <person name="Takiguchi S."/>
            <person name="Watanabe S."/>
            <person name="Yosida M."/>
            <person name="Hotuta T."/>
            <person name="Kusano J."/>
            <person name="Kanehori K."/>
            <person name="Takahashi-Fujii A."/>
            <person name="Hara H."/>
            <person name="Tanase T.-O."/>
            <person name="Nomura Y."/>
            <person name="Togiya S."/>
            <person name="Komai F."/>
            <person name="Hara R."/>
            <person name="Takeuchi K."/>
            <person name="Arita M."/>
            <person name="Imose N."/>
            <person name="Musashino K."/>
            <person name="Yuuki H."/>
            <person name="Oshima A."/>
            <person name="Sasaki N."/>
            <person name="Aotsuka S."/>
            <person name="Yoshikawa Y."/>
            <person name="Matsunawa H."/>
            <person name="Ichihara T."/>
            <person name="Shiohata N."/>
            <person name="Sano S."/>
            <person name="Moriya S."/>
            <person name="Momiyama H."/>
            <person name="Satoh N."/>
            <person name="Takami S."/>
            <person name="Terashima Y."/>
            <person name="Suzuki O."/>
            <person name="Nakagawa S."/>
            <person name="Senoh A."/>
            <person name="Mizoguchi H."/>
            <person name="Goto Y."/>
            <person name="Shimizu F."/>
            <person name="Wakebe H."/>
            <person name="Hishigaki H."/>
            <person name="Watanabe T."/>
            <person name="Sugiyama A."/>
            <person name="Takemoto M."/>
            <person name="Kawakami B."/>
            <person name="Yamazaki M."/>
            <person name="Watanabe K."/>
            <person name="Kumagai A."/>
            <person name="Itakura S."/>
            <person name="Fukuzumi Y."/>
            <person name="Fujimori Y."/>
            <person name="Komiyama M."/>
            <person name="Tashiro H."/>
            <person name="Tanigami A."/>
            <person name="Fujiwara T."/>
            <person name="Ono T."/>
            <person name="Yamada K."/>
            <person name="Fujii Y."/>
            <person name="Ozaki K."/>
            <person name="Hirao M."/>
            <person name="Ohmori Y."/>
            <person name="Kawabata A."/>
            <person name="Hikiji T."/>
            <person name="Kobatake N."/>
            <person name="Inagaki H."/>
            <person name="Ikema Y."/>
            <person name="Okamoto S."/>
            <person name="Okitani R."/>
            <person name="Kawakami T."/>
            <person name="Noguchi S."/>
            <person name="Itoh T."/>
            <person name="Shigeta K."/>
            <person name="Senba T."/>
            <person name="Matsumura K."/>
            <person name="Nakajima Y."/>
            <person name="Mizuno T."/>
            <person name="Morinaga M."/>
            <person name="Sasaki M."/>
            <person name="Togashi T."/>
            <person name="Oyama M."/>
            <person name="Hata H."/>
            <person name="Watanabe M."/>
            <person name="Komatsu T."/>
            <person name="Mizushima-Sugano J."/>
            <person name="Satoh T."/>
            <person name="Shirai Y."/>
            <person name="Takahashi Y."/>
            <person name="Nakagawa K."/>
            <person name="Okumura K."/>
            <person name="Nagase T."/>
            <person name="Nomura N."/>
            <person name="Kikuchi H."/>
            <person name="Masuho Y."/>
            <person name="Yamashita R."/>
            <person name="Nakai K."/>
            <person name="Yada T."/>
            <person name="Nakamura Y."/>
            <person name="Ohara O."/>
            <person name="Isogai T."/>
            <person name="Sugano S."/>
        </authorList>
    </citation>
    <scope>NUCLEOTIDE SEQUENCE [LARGE SCALE MRNA] (ISOFORM 2)</scope>
    <source>
        <tissue>Spleen</tissue>
    </source>
</reference>
<reference key="2">
    <citation type="journal article" date="2005" name="DNA Res.">
        <title>Signal sequence and keyword trap in silico for selection of full-length human cDNAs encoding secretion or membrane proteins from oligo-capped cDNA libraries.</title>
        <authorList>
            <person name="Otsuki T."/>
            <person name="Ota T."/>
            <person name="Nishikawa T."/>
            <person name="Hayashi K."/>
            <person name="Suzuki Y."/>
            <person name="Yamamoto J."/>
            <person name="Wakamatsu A."/>
            <person name="Kimura K."/>
            <person name="Sakamoto K."/>
            <person name="Hatano N."/>
            <person name="Kawai Y."/>
            <person name="Ishii S."/>
            <person name="Saito K."/>
            <person name="Kojima S."/>
            <person name="Sugiyama T."/>
            <person name="Ono T."/>
            <person name="Okano K."/>
            <person name="Yoshikawa Y."/>
            <person name="Aotsuka S."/>
            <person name="Sasaki N."/>
            <person name="Hattori A."/>
            <person name="Okumura K."/>
            <person name="Nagai K."/>
            <person name="Sugano S."/>
            <person name="Isogai T."/>
        </authorList>
    </citation>
    <scope>NUCLEOTIDE SEQUENCE [LARGE SCALE MRNA] (ISOFORM 1)</scope>
</reference>
<reference key="3">
    <citation type="journal article" date="2003" name="Nature">
        <title>The DNA sequence and analysis of human chromosome 6.</title>
        <authorList>
            <person name="Mungall A.J."/>
            <person name="Palmer S.A."/>
            <person name="Sims S.K."/>
            <person name="Edwards C.A."/>
            <person name="Ashurst J.L."/>
            <person name="Wilming L."/>
            <person name="Jones M.C."/>
            <person name="Horton R."/>
            <person name="Hunt S.E."/>
            <person name="Scott C.E."/>
            <person name="Gilbert J.G.R."/>
            <person name="Clamp M.E."/>
            <person name="Bethel G."/>
            <person name="Milne S."/>
            <person name="Ainscough R."/>
            <person name="Almeida J.P."/>
            <person name="Ambrose K.D."/>
            <person name="Andrews T.D."/>
            <person name="Ashwell R.I.S."/>
            <person name="Babbage A.K."/>
            <person name="Bagguley C.L."/>
            <person name="Bailey J."/>
            <person name="Banerjee R."/>
            <person name="Barker D.J."/>
            <person name="Barlow K.F."/>
            <person name="Bates K."/>
            <person name="Beare D.M."/>
            <person name="Beasley H."/>
            <person name="Beasley O."/>
            <person name="Bird C.P."/>
            <person name="Blakey S.E."/>
            <person name="Bray-Allen S."/>
            <person name="Brook J."/>
            <person name="Brown A.J."/>
            <person name="Brown J.Y."/>
            <person name="Burford D.C."/>
            <person name="Burrill W."/>
            <person name="Burton J."/>
            <person name="Carder C."/>
            <person name="Carter N.P."/>
            <person name="Chapman J.C."/>
            <person name="Clark S.Y."/>
            <person name="Clark G."/>
            <person name="Clee C.M."/>
            <person name="Clegg S."/>
            <person name="Cobley V."/>
            <person name="Collier R.E."/>
            <person name="Collins J.E."/>
            <person name="Colman L.K."/>
            <person name="Corby N.R."/>
            <person name="Coville G.J."/>
            <person name="Culley K.M."/>
            <person name="Dhami P."/>
            <person name="Davies J."/>
            <person name="Dunn M."/>
            <person name="Earthrowl M.E."/>
            <person name="Ellington A.E."/>
            <person name="Evans K.A."/>
            <person name="Faulkner L."/>
            <person name="Francis M.D."/>
            <person name="Frankish A."/>
            <person name="Frankland J."/>
            <person name="French L."/>
            <person name="Garner P."/>
            <person name="Garnett J."/>
            <person name="Ghori M.J."/>
            <person name="Gilby L.M."/>
            <person name="Gillson C.J."/>
            <person name="Glithero R.J."/>
            <person name="Grafham D.V."/>
            <person name="Grant M."/>
            <person name="Gribble S."/>
            <person name="Griffiths C."/>
            <person name="Griffiths M.N.D."/>
            <person name="Hall R."/>
            <person name="Halls K.S."/>
            <person name="Hammond S."/>
            <person name="Harley J.L."/>
            <person name="Hart E.A."/>
            <person name="Heath P.D."/>
            <person name="Heathcott R."/>
            <person name="Holmes S.J."/>
            <person name="Howden P.J."/>
            <person name="Howe K.L."/>
            <person name="Howell G.R."/>
            <person name="Huckle E."/>
            <person name="Humphray S.J."/>
            <person name="Humphries M.D."/>
            <person name="Hunt A.R."/>
            <person name="Johnson C.M."/>
            <person name="Joy A.A."/>
            <person name="Kay M."/>
            <person name="Keenan S.J."/>
            <person name="Kimberley A.M."/>
            <person name="King A."/>
            <person name="Laird G.K."/>
            <person name="Langford C."/>
            <person name="Lawlor S."/>
            <person name="Leongamornlert D.A."/>
            <person name="Leversha M."/>
            <person name="Lloyd C.R."/>
            <person name="Lloyd D.M."/>
            <person name="Loveland J.E."/>
            <person name="Lovell J."/>
            <person name="Martin S."/>
            <person name="Mashreghi-Mohammadi M."/>
            <person name="Maslen G.L."/>
            <person name="Matthews L."/>
            <person name="McCann O.T."/>
            <person name="McLaren S.J."/>
            <person name="McLay K."/>
            <person name="McMurray A."/>
            <person name="Moore M.J.F."/>
            <person name="Mullikin J.C."/>
            <person name="Niblett D."/>
            <person name="Nickerson T."/>
            <person name="Novik K.L."/>
            <person name="Oliver K."/>
            <person name="Overton-Larty E.K."/>
            <person name="Parker A."/>
            <person name="Patel R."/>
            <person name="Pearce A.V."/>
            <person name="Peck A.I."/>
            <person name="Phillimore B.J.C.T."/>
            <person name="Phillips S."/>
            <person name="Plumb R.W."/>
            <person name="Porter K.M."/>
            <person name="Ramsey Y."/>
            <person name="Ranby S.A."/>
            <person name="Rice C.M."/>
            <person name="Ross M.T."/>
            <person name="Searle S.M."/>
            <person name="Sehra H.K."/>
            <person name="Sheridan E."/>
            <person name="Skuce C.D."/>
            <person name="Smith S."/>
            <person name="Smith M."/>
            <person name="Spraggon L."/>
            <person name="Squares S.L."/>
            <person name="Steward C.A."/>
            <person name="Sycamore N."/>
            <person name="Tamlyn-Hall G."/>
            <person name="Tester J."/>
            <person name="Theaker A.J."/>
            <person name="Thomas D.W."/>
            <person name="Thorpe A."/>
            <person name="Tracey A."/>
            <person name="Tromans A."/>
            <person name="Tubby B."/>
            <person name="Wall M."/>
            <person name="Wallis J.M."/>
            <person name="West A.P."/>
            <person name="White S.S."/>
            <person name="Whitehead S.L."/>
            <person name="Whittaker H."/>
            <person name="Wild A."/>
            <person name="Willey D.J."/>
            <person name="Wilmer T.E."/>
            <person name="Wood J.M."/>
            <person name="Wray P.W."/>
            <person name="Wyatt J.C."/>
            <person name="Young L."/>
            <person name="Younger R.M."/>
            <person name="Bentley D.R."/>
            <person name="Coulson A."/>
            <person name="Durbin R.M."/>
            <person name="Hubbard T."/>
            <person name="Sulston J.E."/>
            <person name="Dunham I."/>
            <person name="Rogers J."/>
            <person name="Beck S."/>
        </authorList>
    </citation>
    <scope>NUCLEOTIDE SEQUENCE [LARGE SCALE GENOMIC DNA]</scope>
</reference>
<reference key="4">
    <citation type="journal article" date="2004" name="Genome Res.">
        <title>The status, quality, and expansion of the NIH full-length cDNA project: the Mammalian Gene Collection (MGC).</title>
        <authorList>
            <consortium name="The MGC Project Team"/>
        </authorList>
    </citation>
    <scope>NUCLEOTIDE SEQUENCE [LARGE SCALE MRNA] (ISOFORM 1)</scope>
    <source>
        <tissue>Brain</tissue>
    </source>
</reference>
<reference key="5">
    <citation type="journal article" date="2005" name="J. Cell Sci.">
        <title>LEM2 is a novel MAN1-related inner nuclear membrane protein associated with A-type lamins.</title>
        <authorList>
            <person name="Brachner A."/>
            <person name="Reipert S."/>
            <person name="Foisner R."/>
            <person name="Gotzmann J."/>
        </authorList>
    </citation>
    <scope>FUNCTION</scope>
    <scope>SUBCELLULAR LOCATION</scope>
    <scope>INTERACTION WITH LMNA</scope>
    <scope>TISSUE SPECIFICITY</scope>
    <scope>DOMAIN</scope>
</reference>
<reference key="6">
    <citation type="journal article" date="2006" name="Cell">
        <title>Global, in vivo, and site-specific phosphorylation dynamics in signaling networks.</title>
        <authorList>
            <person name="Olsen J.V."/>
            <person name="Blagoev B."/>
            <person name="Gnad F."/>
            <person name="Macek B."/>
            <person name="Kumar C."/>
            <person name="Mortensen P."/>
            <person name="Mann M."/>
        </authorList>
    </citation>
    <scope>IDENTIFICATION BY MASS SPECTROMETRY [LARGE SCALE ANALYSIS]</scope>
    <source>
        <tissue>Cervix carcinoma</tissue>
    </source>
</reference>
<reference key="7">
    <citation type="journal article" date="2006" name="FEBS Lett.">
        <title>The inner nuclear membrane protein Lem2 is critical for normal nuclear envelope morphology.</title>
        <authorList>
            <person name="Ulbert S."/>
            <person name="Antonin W."/>
            <person name="Platani M."/>
            <person name="Mattaj I.W."/>
        </authorList>
    </citation>
    <scope>FUNCTION</scope>
    <scope>SUBCELLULAR LOCATION</scope>
</reference>
<reference key="8">
    <citation type="journal article" date="2008" name="Proc. Natl. Acad. Sci. U.S.A.">
        <title>A quantitative atlas of mitotic phosphorylation.</title>
        <authorList>
            <person name="Dephoure N."/>
            <person name="Zhou C."/>
            <person name="Villen J."/>
            <person name="Beausoleil S.A."/>
            <person name="Bakalarski C.E."/>
            <person name="Elledge S.J."/>
            <person name="Gygi S.P."/>
        </authorList>
    </citation>
    <scope>PHOSPHORYLATION [LARGE SCALE ANALYSIS] AT SER-499</scope>
    <scope>IDENTIFICATION BY MASS SPECTROMETRY [LARGE SCALE ANALYSIS]</scope>
    <source>
        <tissue>Cervix carcinoma</tissue>
    </source>
</reference>
<reference key="9">
    <citation type="journal article" date="2008" name="Proteomics">
        <title>Large-scale phosphoproteome analysis of human liver tissue by enrichment and fractionation of phosphopeptides with strong anion exchange chromatography.</title>
        <authorList>
            <person name="Han G."/>
            <person name="Ye M."/>
            <person name="Zhou H."/>
            <person name="Jiang X."/>
            <person name="Feng S."/>
            <person name="Jiang X."/>
            <person name="Tian R."/>
            <person name="Wan D."/>
            <person name="Zou H."/>
            <person name="Gu J."/>
        </authorList>
    </citation>
    <scope>IDENTIFICATION BY MASS SPECTROMETRY [LARGE SCALE ANALYSIS]</scope>
    <source>
        <tissue>Liver</tissue>
    </source>
</reference>
<reference key="10">
    <citation type="journal article" date="2010" name="Sci. Signal.">
        <title>Quantitative phosphoproteomics reveals widespread full phosphorylation site occupancy during mitosis.</title>
        <authorList>
            <person name="Olsen J.V."/>
            <person name="Vermeulen M."/>
            <person name="Santamaria A."/>
            <person name="Kumar C."/>
            <person name="Miller M.L."/>
            <person name="Jensen L.J."/>
            <person name="Gnad F."/>
            <person name="Cox J."/>
            <person name="Jensen T.S."/>
            <person name="Nigg E.A."/>
            <person name="Brunak S."/>
            <person name="Mann M."/>
        </authorList>
    </citation>
    <scope>PHOSPHORYLATION [LARGE SCALE ANALYSIS] AT SER-499</scope>
    <scope>IDENTIFICATION BY MASS SPECTROMETRY [LARGE SCALE ANALYSIS]</scope>
    <source>
        <tissue>Cervix carcinoma</tissue>
    </source>
</reference>
<reference key="11">
    <citation type="journal article" date="2011" name="Sci. Signal.">
        <title>System-wide temporal characterization of the proteome and phosphoproteome of human embryonic stem cell differentiation.</title>
        <authorList>
            <person name="Rigbolt K.T."/>
            <person name="Prokhorova T.A."/>
            <person name="Akimov V."/>
            <person name="Henningsen J."/>
            <person name="Johansen P.T."/>
            <person name="Kratchmarova I."/>
            <person name="Kassem M."/>
            <person name="Mann M."/>
            <person name="Olsen J.V."/>
            <person name="Blagoev B."/>
        </authorList>
    </citation>
    <scope>PHOSPHORYLATION [LARGE SCALE ANALYSIS] AT SER-497 AND SER-499</scope>
    <scope>IDENTIFICATION BY MASS SPECTROMETRY [LARGE SCALE ANALYSIS]</scope>
</reference>
<reference key="12">
    <citation type="journal article" date="2012" name="Proc. Natl. Acad. Sci. U.S.A.">
        <title>N-terminal acetylome analyses and functional insights of the N-terminal acetyltransferase NatB.</title>
        <authorList>
            <person name="Van Damme P."/>
            <person name="Lasa M."/>
            <person name="Polevoda B."/>
            <person name="Gazquez C."/>
            <person name="Elosegui-Artola A."/>
            <person name="Kim D.S."/>
            <person name="De Juan-Pardo E."/>
            <person name="Demeyer K."/>
            <person name="Hole K."/>
            <person name="Larrea E."/>
            <person name="Timmerman E."/>
            <person name="Prieto J."/>
            <person name="Arnesen T."/>
            <person name="Sherman F."/>
            <person name="Gevaert K."/>
            <person name="Aldabe R."/>
        </authorList>
    </citation>
    <scope>ACETYLATION [LARGE SCALE ANALYSIS] AT ALA-2</scope>
    <scope>CLEAVAGE OF INITIATOR METHIONINE [LARGE SCALE ANALYSIS]</scope>
    <scope>IDENTIFICATION BY MASS SPECTROMETRY [LARGE SCALE ANALYSIS]</scope>
</reference>
<reference key="13">
    <citation type="journal article" date="2013" name="J. Proteome Res.">
        <title>Toward a comprehensive characterization of a human cancer cell phosphoproteome.</title>
        <authorList>
            <person name="Zhou H."/>
            <person name="Di Palma S."/>
            <person name="Preisinger C."/>
            <person name="Peng M."/>
            <person name="Polat A.N."/>
            <person name="Heck A.J."/>
            <person name="Mohammed S."/>
        </authorList>
    </citation>
    <scope>PHOSPHORYLATION [LARGE SCALE ANALYSIS] AT SER-166; SER-175; SER-499 AND SER-501</scope>
    <scope>IDENTIFICATION BY MASS SPECTROMETRY [LARGE SCALE ANALYSIS]</scope>
    <source>
        <tissue>Cervix carcinoma</tissue>
        <tissue>Erythroleukemia</tissue>
    </source>
</reference>
<reference key="14">
    <citation type="journal article" date="2014" name="J. Proteomics">
        <title>An enzyme assisted RP-RPLC approach for in-depth analysis of human liver phosphoproteome.</title>
        <authorList>
            <person name="Bian Y."/>
            <person name="Song C."/>
            <person name="Cheng K."/>
            <person name="Dong M."/>
            <person name="Wang F."/>
            <person name="Huang J."/>
            <person name="Sun D."/>
            <person name="Wang L."/>
            <person name="Ye M."/>
            <person name="Zou H."/>
        </authorList>
    </citation>
    <scope>IDENTIFICATION BY MASS SPECTROMETRY [LARGE SCALE ANALYSIS]</scope>
    <source>
        <tissue>Liver</tissue>
    </source>
</reference>
<reference key="15">
    <citation type="journal article" date="2015" name="Proteomics">
        <title>N-terminome analysis of the human mitochondrial proteome.</title>
        <authorList>
            <person name="Vaca Jacome A.S."/>
            <person name="Rabilloud T."/>
            <person name="Schaeffer-Reiss C."/>
            <person name="Rompais M."/>
            <person name="Ayoub D."/>
            <person name="Lane L."/>
            <person name="Bairoch A."/>
            <person name="Van Dorsselaer A."/>
            <person name="Carapito C."/>
        </authorList>
    </citation>
    <scope>IDENTIFICATION BY MASS SPECTROMETRY [LARGE SCALE ANALYSIS]</scope>
</reference>
<reference key="16">
    <citation type="journal article" date="2017" name="Proc. Natl. Acad. Sci. U.S.A.">
        <title>LEM2 recruits CHMP7 for ESCRT-mediated nuclear envelope closure in fission yeast and human cells.</title>
        <authorList>
            <person name="Gu M."/>
            <person name="LaJoie D."/>
            <person name="Chen O.S."/>
            <person name="von Appen A."/>
            <person name="Ladinsky M.S."/>
            <person name="Redd M.J."/>
            <person name="Nikolova L."/>
            <person name="Bjorkman P.J."/>
            <person name="Sundquist W.I."/>
            <person name="Ullman K.S."/>
            <person name="Frost A."/>
        </authorList>
    </citation>
    <scope>FUNCTION</scope>
    <scope>SUBCELLULAR LOCATION</scope>
    <scope>INTERACTION WITH CHMP7</scope>
</reference>
<reference key="17">
    <citation type="journal article" date="2020" name="Nature">
        <title>LEM2 phase separation promotes ESCRT-mediated nuclear envelope reformation.</title>
        <authorList>
            <person name="von Appen A."/>
            <person name="LaJoie D."/>
            <person name="Johnson I.E."/>
            <person name="Trnka M.J."/>
            <person name="Pick S.M."/>
            <person name="Burlingame A.L."/>
            <person name="Ullman K.S."/>
            <person name="Frost A."/>
        </authorList>
    </citation>
    <scope>FUNCTION</scope>
    <scope>INTERACTION WITH BANF1 AND TUBULIN</scope>
    <scope>SUBCELLULAR LOCATION</scope>
    <scope>DOMAIN</scope>
    <scope>MUTAGENESIS OF 21-GLU--THR-24; 43-ARG--VAL-202; 145-ALA--LEU-213 AND 415-VAL--GLU-485</scope>
    <scope>PHOSPHORYLATION</scope>
</reference>
<reference key="18">
    <citation type="journal article" date="2016" name="Mol. Genet. Genomic Med.">
        <title>Hutterite-type cataract maps to chromosome 6p21.32-p21.31, cosegregates with a homozygous mutation in LEMD2, and is associated with sudden cardiac death.</title>
        <authorList>
            <person name="Boone P.M."/>
            <person name="Yuan B."/>
            <person name="Gu S."/>
            <person name="Ma Z."/>
            <person name="Gambin T."/>
            <person name="Gonzaga-Jauregui C."/>
            <person name="Jain M."/>
            <person name="Murdock T.J."/>
            <person name="White J.J."/>
            <person name="Jhangiani S.N."/>
            <person name="Walker K."/>
            <person name="Wang Q."/>
            <person name="Muzny D.M."/>
            <person name="Gibbs R.A."/>
            <person name="Hejtmancik J.F."/>
            <person name="Lupski J.R."/>
            <person name="Posey J.E."/>
            <person name="Lewis R.A."/>
        </authorList>
    </citation>
    <scope>INVOLVEMENT IN CTRCT46</scope>
    <scope>VARIANT CTRCT46 ARG-13</scope>
</reference>
<reference key="19">
    <citation type="journal article" date="2019" name="Am. J. Hum. Genet.">
        <title>The Discovery of a LEMD2-Associated Nuclear Envelopathy with Early Progeroid Appearance Suggests Advanced Applications for AI-Driven Facial Phenotyping.</title>
        <authorList>
            <person name="Marbach F."/>
            <person name="Rustad C.F."/>
            <person name="Riess A."/>
            <person name="Dukic D."/>
            <person name="Hsieh T.C."/>
            <person name="Jobani I."/>
            <person name="Prescott T."/>
            <person name="Bevot A."/>
            <person name="Erger F."/>
            <person name="Houge G."/>
            <person name="Redfors M."/>
            <person name="Altmueller J."/>
            <person name="Stokowy T."/>
            <person name="Gilissen C."/>
            <person name="Kubisch C."/>
            <person name="Scarano E."/>
            <person name="Mazzanti L."/>
            <person name="Fiskerstrand T."/>
            <person name="Krawitz P.M."/>
            <person name="Lessel D."/>
            <person name="Netzer C."/>
        </authorList>
    </citation>
    <scope>INVOLVEMENT IN MARUPS</scope>
    <scope>VARIANT MARUPS PHE-479</scope>
    <scope>SUBCELLULAR LOCATION</scope>
</reference>